<reference key="1">
    <citation type="journal article" date="1999" name="Nature">
        <title>Sequence and analysis of chromosome 2 of the plant Arabidopsis thaliana.</title>
        <authorList>
            <person name="Lin X."/>
            <person name="Kaul S."/>
            <person name="Rounsley S.D."/>
            <person name="Shea T.P."/>
            <person name="Benito M.-I."/>
            <person name="Town C.D."/>
            <person name="Fujii C.Y."/>
            <person name="Mason T.M."/>
            <person name="Bowman C.L."/>
            <person name="Barnstead M.E."/>
            <person name="Feldblyum T.V."/>
            <person name="Buell C.R."/>
            <person name="Ketchum K.A."/>
            <person name="Lee J.J."/>
            <person name="Ronning C.M."/>
            <person name="Koo H.L."/>
            <person name="Moffat K.S."/>
            <person name="Cronin L.A."/>
            <person name="Shen M."/>
            <person name="Pai G."/>
            <person name="Van Aken S."/>
            <person name="Umayam L."/>
            <person name="Tallon L.J."/>
            <person name="Gill J.E."/>
            <person name="Adams M.D."/>
            <person name="Carrera A.J."/>
            <person name="Creasy T.H."/>
            <person name="Goodman H.M."/>
            <person name="Somerville C.R."/>
            <person name="Copenhaver G.P."/>
            <person name="Preuss D."/>
            <person name="Nierman W.C."/>
            <person name="White O."/>
            <person name="Eisen J.A."/>
            <person name="Salzberg S.L."/>
            <person name="Fraser C.M."/>
            <person name="Venter J.C."/>
        </authorList>
    </citation>
    <scope>NUCLEOTIDE SEQUENCE [LARGE SCALE GENOMIC DNA]</scope>
    <source>
        <strain>cv. Columbia</strain>
    </source>
</reference>
<reference key="2">
    <citation type="journal article" date="2017" name="Plant J.">
        <title>Araport11: a complete reannotation of the Arabidopsis thaliana reference genome.</title>
        <authorList>
            <person name="Cheng C.Y."/>
            <person name="Krishnakumar V."/>
            <person name="Chan A.P."/>
            <person name="Thibaud-Nissen F."/>
            <person name="Schobel S."/>
            <person name="Town C.D."/>
        </authorList>
    </citation>
    <scope>GENOME REANNOTATION</scope>
    <source>
        <strain>cv. Columbia</strain>
    </source>
</reference>
<reference key="3">
    <citation type="submission" date="2004-12" db="EMBL/GenBank/DDBJ databases">
        <title>Arabidopsis ORF clones.</title>
        <authorList>
            <person name="Shinn P."/>
            <person name="Chen H."/>
            <person name="Cheuk R.F."/>
            <person name="Kim C.J."/>
            <person name="Ecker J.R."/>
        </authorList>
    </citation>
    <scope>NUCLEOTIDE SEQUENCE [LARGE SCALE MRNA]</scope>
    <source>
        <strain>cv. Columbia</strain>
    </source>
</reference>
<reference key="4">
    <citation type="submission" date="2006-07" db="EMBL/GenBank/DDBJ databases">
        <title>Large-scale analysis of RIKEN Arabidopsis full-length (RAFL) cDNAs.</title>
        <authorList>
            <person name="Totoki Y."/>
            <person name="Seki M."/>
            <person name="Ishida J."/>
            <person name="Nakajima M."/>
            <person name="Enju A."/>
            <person name="Kamiya A."/>
            <person name="Narusaka M."/>
            <person name="Shin-i T."/>
            <person name="Nakagawa M."/>
            <person name="Sakamoto N."/>
            <person name="Oishi K."/>
            <person name="Kohara Y."/>
            <person name="Kobayashi M."/>
            <person name="Toyoda A."/>
            <person name="Sakaki Y."/>
            <person name="Sakurai T."/>
            <person name="Iida K."/>
            <person name="Akiyama K."/>
            <person name="Satou M."/>
            <person name="Toyoda T."/>
            <person name="Konagaya A."/>
            <person name="Carninci P."/>
            <person name="Kawai J."/>
            <person name="Hayashizaki Y."/>
            <person name="Shinozaki K."/>
        </authorList>
    </citation>
    <scope>NUCLEOTIDE SEQUENCE [LARGE SCALE MRNA] OF 1-382</scope>
    <source>
        <strain>cv. Columbia</strain>
    </source>
</reference>
<reference key="5">
    <citation type="journal article" date="2007" name="Curr. Biol.">
        <title>A Novel ROP/RAC effector links cell polarity, root-meristem maintenance, and vesicle trafficking.</title>
        <authorList>
            <person name="Lavy M."/>
            <person name="Bloch D."/>
            <person name="Hazak O."/>
            <person name="Gutman I."/>
            <person name="Poraty L."/>
            <person name="Sorek N."/>
            <person name="Sternberg H."/>
            <person name="Yalovsky S."/>
        </authorList>
    </citation>
    <scope>IDENTIFICATION</scope>
    <scope>INTERACTION WITH ARAC8; ICR1 AND SEC3A</scope>
</reference>
<reference key="6">
    <citation type="journal article" date="2008" name="Mol. Plant">
        <title>RIP1 (ROP Interactive Partner 1)/ICR1 marks pollen germination sites and may act in the ROP1 pathway in the control of polarized pollen growth.</title>
        <authorList>
            <person name="Li S."/>
            <person name="Gu Y."/>
            <person name="Yan A."/>
            <person name="Lord E."/>
            <person name="Yang Z.B."/>
        </authorList>
    </citation>
    <scope>INTERACTION WITH ARAC11</scope>
    <scope>GENE FAMILY</scope>
    <scope>NOMENCLATURE</scope>
</reference>
<reference key="7">
    <citation type="journal article" date="2008" name="PLoS ONE">
        <title>Sorting signals, N-terminal modifications and abundance of the chloroplast proteome.</title>
        <authorList>
            <person name="Zybailov B."/>
            <person name="Rutschow H."/>
            <person name="Friso G."/>
            <person name="Rudella A."/>
            <person name="Emanuelsson O."/>
            <person name="Sun Q."/>
            <person name="van Wijk K.J."/>
        </authorList>
    </citation>
    <scope>IDENTIFICATION BY MASS SPECTROMETRY</scope>
    <scope>SUBCELLULAR LOCATION [LARGE SCALE ANALYSIS]</scope>
</reference>
<reference key="8">
    <citation type="journal article" date="2009" name="Plant Physiol.">
        <title>Large-scale Arabidopsis phosphoproteome profiling reveals novel chloroplast kinase substrates and phosphorylation networks.</title>
        <authorList>
            <person name="Reiland S."/>
            <person name="Messerli G."/>
            <person name="Baerenfaller K."/>
            <person name="Gerrits B."/>
            <person name="Endler A."/>
            <person name="Grossmann J."/>
            <person name="Gruissem W."/>
            <person name="Baginsky S."/>
        </authorList>
    </citation>
    <scope>PHOSPHORYLATION [LARGE SCALE ANALYSIS] AT SER-540</scope>
    <scope>IDENTIFICATION BY MASS SPECTROMETRY [LARGE SCALE ANALYSIS]</scope>
</reference>
<reference key="9">
    <citation type="journal article" date="2010" name="Eur. J. Cell Biol.">
        <title>RIP3 and AtKinesin-13A - a novel interaction linking Rho proteins of plants to microtubules.</title>
        <authorList>
            <person name="Mucha E."/>
            <person name="Hoefle C."/>
            <person name="Huckelhoven R."/>
            <person name="Berken A."/>
        </authorList>
    </citation>
    <scope>INTERACTION WITH KIN13A</scope>
</reference>
<dbReference type="EMBL" id="AC006260">
    <property type="protein sequence ID" value="AAD18151.1"/>
    <property type="molecule type" value="Genomic_DNA"/>
</dbReference>
<dbReference type="EMBL" id="CP002685">
    <property type="protein sequence ID" value="AEC09349.1"/>
    <property type="molecule type" value="Genomic_DNA"/>
</dbReference>
<dbReference type="EMBL" id="CP002685">
    <property type="protein sequence ID" value="ANM61939.1"/>
    <property type="molecule type" value="Genomic_DNA"/>
</dbReference>
<dbReference type="EMBL" id="BT020383">
    <property type="protein sequence ID" value="AAV91329.1"/>
    <property type="molecule type" value="mRNA"/>
</dbReference>
<dbReference type="EMBL" id="BT020462">
    <property type="protein sequence ID" value="AAW30040.1"/>
    <property type="molecule type" value="mRNA"/>
</dbReference>
<dbReference type="EMBL" id="AK226196">
    <property type="protein sequence ID" value="BAE98361.1"/>
    <property type="molecule type" value="mRNA"/>
</dbReference>
<dbReference type="PIR" id="C84788">
    <property type="entry name" value="C84788"/>
</dbReference>
<dbReference type="RefSeq" id="NP_001324128.1">
    <property type="nucleotide sequence ID" value="NM_001336624.1"/>
</dbReference>
<dbReference type="RefSeq" id="NP_181245.1">
    <property type="nucleotide sequence ID" value="NM_129264.4"/>
</dbReference>
<dbReference type="SMR" id="Q9ZQC5"/>
<dbReference type="BioGRID" id="3628">
    <property type="interactions" value="1"/>
</dbReference>
<dbReference type="FunCoup" id="Q9ZQC5">
    <property type="interactions" value="2050"/>
</dbReference>
<dbReference type="STRING" id="3702.Q9ZQC5"/>
<dbReference type="iPTMnet" id="Q9ZQC5"/>
<dbReference type="PaxDb" id="3702-AT2G37080.1"/>
<dbReference type="ProteomicsDB" id="228768"/>
<dbReference type="EnsemblPlants" id="AT2G37080.1">
    <property type="protein sequence ID" value="AT2G37080.1"/>
    <property type="gene ID" value="AT2G37080"/>
</dbReference>
<dbReference type="EnsemblPlants" id="AT2G37080.2">
    <property type="protein sequence ID" value="AT2G37080.2"/>
    <property type="gene ID" value="AT2G37080"/>
</dbReference>
<dbReference type="GeneID" id="818284"/>
<dbReference type="Gramene" id="AT2G37080.1">
    <property type="protein sequence ID" value="AT2G37080.1"/>
    <property type="gene ID" value="AT2G37080"/>
</dbReference>
<dbReference type="Gramene" id="AT2G37080.2">
    <property type="protein sequence ID" value="AT2G37080.2"/>
    <property type="gene ID" value="AT2G37080"/>
</dbReference>
<dbReference type="KEGG" id="ath:AT2G37080"/>
<dbReference type="Araport" id="AT2G37080"/>
<dbReference type="TAIR" id="AT2G37080">
    <property type="gene designation" value="RIP2"/>
</dbReference>
<dbReference type="eggNOG" id="ENOG502QT2U">
    <property type="taxonomic scope" value="Eukaryota"/>
</dbReference>
<dbReference type="HOGENOM" id="CLU_022222_0_0_1"/>
<dbReference type="InParanoid" id="Q9ZQC5"/>
<dbReference type="OMA" id="SADKEFE"/>
<dbReference type="PhylomeDB" id="Q9ZQC5"/>
<dbReference type="CD-CODE" id="4299E36E">
    <property type="entry name" value="Nucleolus"/>
</dbReference>
<dbReference type="PRO" id="PR:Q9ZQC5"/>
<dbReference type="Proteomes" id="UP000006548">
    <property type="component" value="Chromosome 2"/>
</dbReference>
<dbReference type="ExpressionAtlas" id="Q9ZQC5">
    <property type="expression patterns" value="baseline and differential"/>
</dbReference>
<dbReference type="GO" id="GO:0009507">
    <property type="term" value="C:chloroplast"/>
    <property type="evidence" value="ECO:0007005"/>
    <property type="project" value="TAIR"/>
</dbReference>
<dbReference type="InterPro" id="IPR029688">
    <property type="entry name" value="ICR"/>
</dbReference>
<dbReference type="PANTHER" id="PTHR34224:SF4">
    <property type="entry name" value="INTERACTOR OF CONSTITUTIVE ACTIVE ROPS 2, CHLOROPLASTIC"/>
    <property type="match status" value="1"/>
</dbReference>
<dbReference type="PANTHER" id="PTHR34224">
    <property type="entry name" value="INTERACTOR OF CONSTITUTIVE ACTIVE ROPS 2, CHLOROPLASTIC-RELATED"/>
    <property type="match status" value="1"/>
</dbReference>
<accession>Q9ZQC5</accession>
<accession>Q0WWY7</accession>
<protein>
    <recommendedName>
        <fullName>Interactor of constitutive active ROPs 2, chloroplastic</fullName>
    </recommendedName>
    <alternativeName>
        <fullName>ROP-interactive partner 2</fullName>
    </alternativeName>
</protein>
<sequence>MQTPKPRPGSLEVPQKKSPASTPKTARKLKTSESDPVSSPNTKIRTPKTQSPKVVADRRSPRTPVNEIQKKRTGKTPELASQISQLQEELKKAKEQLSASEALKKEAQDQAEETKQQLMEINASEDSRIDELRKLSQERDKAWQSELEAMQRQHAMDSAALSSTMNEVQKLKAQLSESENVENLRMELNETLSLVEKLRGELFDAKEGEAQAHEIVSGTEKQLEIANLTLEMLRSDGMKMSEACNSLTTELEQSKSEVRSLEQLVRQLEEEDEARGNANGDSSSVEELKEEINVARQEISQLKSAVEVTERRYHEEYIQSTLQIRTAYEQVDEVKSGYAQREAELGEELKKTKAERDSLHERLMDKEAKLRILVDENEILNSKIKEKEEVYLNLENSLNQNEPEDTGELKKLESDVMELRANLMDKEMELQSVMSQYESLRSEMETMQSEKNKAIDEALAKLGSLTEEADKSGKRAENATEQLGAAQVTNTELEAELRRLKVQCDQWRKAAEAAATMLSGGNNNNNSNGKYVERTGSLESPLRRRNVNMSPYMGETDDELSSPKKKNGSMLKKIGVLLKKSQK</sequence>
<evidence type="ECO:0000250" key="1"/>
<evidence type="ECO:0000255" key="2"/>
<evidence type="ECO:0000256" key="3">
    <source>
        <dbReference type="SAM" id="MobiDB-lite"/>
    </source>
</evidence>
<evidence type="ECO:0000269" key="4">
    <source>
    </source>
</evidence>
<evidence type="ECO:0000269" key="5">
    <source>
    </source>
</evidence>
<evidence type="ECO:0000269" key="6">
    <source>
    </source>
</evidence>
<evidence type="ECO:0000269" key="7">
    <source>
    </source>
</evidence>
<evidence type="ECO:0000305" key="8"/>
<evidence type="ECO:0007744" key="9">
    <source>
    </source>
</evidence>
<organism>
    <name type="scientific">Arabidopsis thaliana</name>
    <name type="common">Mouse-ear cress</name>
    <dbReference type="NCBI Taxonomy" id="3702"/>
    <lineage>
        <taxon>Eukaryota</taxon>
        <taxon>Viridiplantae</taxon>
        <taxon>Streptophyta</taxon>
        <taxon>Embryophyta</taxon>
        <taxon>Tracheophyta</taxon>
        <taxon>Spermatophyta</taxon>
        <taxon>Magnoliopsida</taxon>
        <taxon>eudicotyledons</taxon>
        <taxon>Gunneridae</taxon>
        <taxon>Pentapetalae</taxon>
        <taxon>rosids</taxon>
        <taxon>malvids</taxon>
        <taxon>Brassicales</taxon>
        <taxon>Brassicaceae</taxon>
        <taxon>Camelineae</taxon>
        <taxon>Arabidopsis</taxon>
    </lineage>
</organism>
<name>ICR2_ARATH</name>
<gene>
    <name type="primary">ICR2</name>
    <name type="synonym">RIP2</name>
    <name type="ordered locus">At2g37080</name>
    <name type="ORF">T2N18.16</name>
</gene>
<proteinExistence type="evidence at protein level"/>
<keyword id="KW-0150">Chloroplast</keyword>
<keyword id="KW-0175">Coiled coil</keyword>
<keyword id="KW-0597">Phosphoprotein</keyword>
<keyword id="KW-0934">Plastid</keyword>
<keyword id="KW-1185">Reference proteome</keyword>
<keyword id="KW-0809">Transit peptide</keyword>
<comment type="function">
    <text evidence="1">Acts as a scaffold, mediating interaction of ROPs with different proteins.</text>
</comment>
<comment type="subunit">
    <text evidence="4 6 7">Interacts with ARAC8, ARAC11 and KIN13A in vitro, but not with ICR1 or SEC3A.</text>
</comment>
<comment type="subcellular location">
    <subcellularLocation>
        <location evidence="5">Plastid</location>
        <location evidence="5">Chloroplast</location>
    </subcellularLocation>
</comment>
<comment type="similarity">
    <text evidence="8">Belongs to the ICR family.</text>
</comment>
<comment type="caution">
    <text evidence="8">Due to the probable chloroplastic localization, the interactions with ROPs are questionable.</text>
</comment>
<feature type="transit peptide" description="Chloroplast" evidence="2">
    <location>
        <begin position="1"/>
        <end position="55"/>
    </location>
</feature>
<feature type="chain" id="PRO_0000356302" description="Interactor of constitutive active ROPs 2, chloroplastic">
    <location>
        <begin position="56"/>
        <end position="583"/>
    </location>
</feature>
<feature type="region of interest" description="Disordered" evidence="3">
    <location>
        <begin position="1"/>
        <end position="80"/>
    </location>
</feature>
<feature type="region of interest" description="Disordered" evidence="3">
    <location>
        <begin position="101"/>
        <end position="125"/>
    </location>
</feature>
<feature type="region of interest" description="Disordered" evidence="3">
    <location>
        <begin position="518"/>
        <end position="583"/>
    </location>
</feature>
<feature type="coiled-coil region" evidence="2">
    <location>
        <begin position="74"/>
        <end position="207"/>
    </location>
</feature>
<feature type="coiled-coil region" evidence="2">
    <location>
        <begin position="238"/>
        <end position="516"/>
    </location>
</feature>
<feature type="compositionally biased region" description="Polar residues" evidence="3">
    <location>
        <begin position="34"/>
        <end position="52"/>
    </location>
</feature>
<feature type="compositionally biased region" description="Basic and acidic residues" evidence="3">
    <location>
        <begin position="102"/>
        <end position="115"/>
    </location>
</feature>
<feature type="compositionally biased region" description="Low complexity" evidence="3">
    <location>
        <begin position="519"/>
        <end position="529"/>
    </location>
</feature>
<feature type="modified residue" description="Phosphoserine" evidence="9">
    <location>
        <position position="540"/>
    </location>
</feature>
<feature type="sequence conflict" description="In Ref. 4; BAE98361." evidence="8" ref="4">
    <location>
        <begin position="68"/>
        <end position="69"/>
    </location>
</feature>